<gene>
    <name type="ordered locus">PA4010</name>
</gene>
<sequence>MSRDPILSLPWPDARPLPDTFFDRDALLVARELLGKVIRHRQGNLWLAARIIETEAYYLEEKGSHASLGYTEKRKALFLDGGHIYMYYARGGDSLNFSAGGPGNAVLIKSGHPWLDRISDHTALERMQSLNPDSQGRPREIGRLCAGQTLLCKAMGLKVPEWDAQRFDPQRLFVDDVGERPSQVIQAARLGIPKGRDEHLPYRFVDAAFAAFCTRNPLRRGQVAGRDYHLLGHQDPHLQ</sequence>
<name>3MGH_PSEAE</name>
<comment type="similarity">
    <text evidence="1">Belongs to the DNA glycosylase MPG family.</text>
</comment>
<feature type="chain" id="PRO_0000100097" description="Putative 3-methyladenine DNA glycosylase">
    <location>
        <begin position="1"/>
        <end position="239"/>
    </location>
</feature>
<protein>
    <recommendedName>
        <fullName evidence="1">Putative 3-methyladenine DNA glycosylase</fullName>
        <ecNumber evidence="1">3.2.2.-</ecNumber>
    </recommendedName>
</protein>
<organism>
    <name type="scientific">Pseudomonas aeruginosa (strain ATCC 15692 / DSM 22644 / CIP 104116 / JCM 14847 / LMG 12228 / 1C / PRS 101 / PAO1)</name>
    <dbReference type="NCBI Taxonomy" id="208964"/>
    <lineage>
        <taxon>Bacteria</taxon>
        <taxon>Pseudomonadati</taxon>
        <taxon>Pseudomonadota</taxon>
        <taxon>Gammaproteobacteria</taxon>
        <taxon>Pseudomonadales</taxon>
        <taxon>Pseudomonadaceae</taxon>
        <taxon>Pseudomonas</taxon>
    </lineage>
</organism>
<reference key="1">
    <citation type="journal article" date="2000" name="Nature">
        <title>Complete genome sequence of Pseudomonas aeruginosa PAO1, an opportunistic pathogen.</title>
        <authorList>
            <person name="Stover C.K."/>
            <person name="Pham X.-Q.T."/>
            <person name="Erwin A.L."/>
            <person name="Mizoguchi S.D."/>
            <person name="Warrener P."/>
            <person name="Hickey M.J."/>
            <person name="Brinkman F.S.L."/>
            <person name="Hufnagle W.O."/>
            <person name="Kowalik D.J."/>
            <person name="Lagrou M."/>
            <person name="Garber R.L."/>
            <person name="Goltry L."/>
            <person name="Tolentino E."/>
            <person name="Westbrock-Wadman S."/>
            <person name="Yuan Y."/>
            <person name="Brody L.L."/>
            <person name="Coulter S.N."/>
            <person name="Folger K.R."/>
            <person name="Kas A."/>
            <person name="Larbig K."/>
            <person name="Lim R.M."/>
            <person name="Smith K.A."/>
            <person name="Spencer D.H."/>
            <person name="Wong G.K.-S."/>
            <person name="Wu Z."/>
            <person name="Paulsen I.T."/>
            <person name="Reizer J."/>
            <person name="Saier M.H. Jr."/>
            <person name="Hancock R.E.W."/>
            <person name="Lory S."/>
            <person name="Olson M.V."/>
        </authorList>
    </citation>
    <scope>NUCLEOTIDE SEQUENCE [LARGE SCALE GENOMIC DNA]</scope>
    <source>
        <strain>ATCC 15692 / DSM 22644 / CIP 104116 / JCM 14847 / LMG 12228 / 1C / PRS 101 / PAO1</strain>
    </source>
</reference>
<evidence type="ECO:0000255" key="1">
    <source>
        <dbReference type="HAMAP-Rule" id="MF_00527"/>
    </source>
</evidence>
<proteinExistence type="inferred from homology"/>
<accession>Q9HX17</accession>
<keyword id="KW-0227">DNA damage</keyword>
<keyword id="KW-0234">DNA repair</keyword>
<keyword id="KW-0378">Hydrolase</keyword>
<keyword id="KW-1185">Reference proteome</keyword>
<dbReference type="EC" id="3.2.2.-" evidence="1"/>
<dbReference type="EMBL" id="AE004091">
    <property type="protein sequence ID" value="AAG07397.1"/>
    <property type="molecule type" value="Genomic_DNA"/>
</dbReference>
<dbReference type="PIR" id="G83143">
    <property type="entry name" value="G83143"/>
</dbReference>
<dbReference type="RefSeq" id="NP_252699.1">
    <property type="nucleotide sequence ID" value="NC_002516.2"/>
</dbReference>
<dbReference type="RefSeq" id="WP_003148099.1">
    <property type="nucleotide sequence ID" value="NZ_QZGE01000038.1"/>
</dbReference>
<dbReference type="SMR" id="Q9HX17"/>
<dbReference type="STRING" id="208964.PA4010"/>
<dbReference type="PaxDb" id="208964-PA4010"/>
<dbReference type="DNASU" id="878960"/>
<dbReference type="GeneID" id="878960"/>
<dbReference type="KEGG" id="pae:PA4010"/>
<dbReference type="PATRIC" id="fig|208964.12.peg.4202"/>
<dbReference type="PseudoCAP" id="PA4010"/>
<dbReference type="HOGENOM" id="CLU_104187_0_0_6"/>
<dbReference type="InParanoid" id="Q9HX17"/>
<dbReference type="OrthoDB" id="9794313at2"/>
<dbReference type="PhylomeDB" id="Q9HX17"/>
<dbReference type="BioCyc" id="PAER208964:G1FZ6-4083-MONOMER"/>
<dbReference type="Proteomes" id="UP000002438">
    <property type="component" value="Chromosome"/>
</dbReference>
<dbReference type="GO" id="GO:0003905">
    <property type="term" value="F:alkylbase DNA N-glycosylase activity"/>
    <property type="evidence" value="ECO:0000318"/>
    <property type="project" value="GO_Central"/>
</dbReference>
<dbReference type="GO" id="GO:0003677">
    <property type="term" value="F:DNA binding"/>
    <property type="evidence" value="ECO:0007669"/>
    <property type="project" value="InterPro"/>
</dbReference>
<dbReference type="GO" id="GO:0006284">
    <property type="term" value="P:base-excision repair"/>
    <property type="evidence" value="ECO:0000318"/>
    <property type="project" value="GO_Central"/>
</dbReference>
<dbReference type="CDD" id="cd00540">
    <property type="entry name" value="AAG"/>
    <property type="match status" value="1"/>
</dbReference>
<dbReference type="FunFam" id="3.10.300.10:FF:000003">
    <property type="entry name" value="Putative 3-methyladenine DNA glycosylase"/>
    <property type="match status" value="1"/>
</dbReference>
<dbReference type="Gene3D" id="3.10.300.10">
    <property type="entry name" value="Methylpurine-DNA glycosylase (MPG)"/>
    <property type="match status" value="1"/>
</dbReference>
<dbReference type="HAMAP" id="MF_00527">
    <property type="entry name" value="3MGH"/>
    <property type="match status" value="1"/>
</dbReference>
<dbReference type="InterPro" id="IPR011034">
    <property type="entry name" value="Formyl_transferase-like_C_sf"/>
</dbReference>
<dbReference type="InterPro" id="IPR003180">
    <property type="entry name" value="MPG"/>
</dbReference>
<dbReference type="InterPro" id="IPR036995">
    <property type="entry name" value="MPG_sf"/>
</dbReference>
<dbReference type="NCBIfam" id="NF002005">
    <property type="entry name" value="PRK00802.1-5"/>
    <property type="match status" value="1"/>
</dbReference>
<dbReference type="PANTHER" id="PTHR10429">
    <property type="entry name" value="DNA-3-METHYLADENINE GLYCOSYLASE"/>
    <property type="match status" value="1"/>
</dbReference>
<dbReference type="PANTHER" id="PTHR10429:SF0">
    <property type="entry name" value="DNA-3-METHYLADENINE GLYCOSYLASE"/>
    <property type="match status" value="1"/>
</dbReference>
<dbReference type="Pfam" id="PF02245">
    <property type="entry name" value="Pur_DNA_glyco"/>
    <property type="match status" value="1"/>
</dbReference>
<dbReference type="SUPFAM" id="SSF50486">
    <property type="entry name" value="FMT C-terminal domain-like"/>
    <property type="match status" value="1"/>
</dbReference>